<keyword id="KW-0225">Disease variant</keyword>
<keyword id="KW-0238">DNA-binding</keyword>
<keyword id="KW-0479">Metal-binding</keyword>
<keyword id="KW-0539">Nucleus</keyword>
<keyword id="KW-0597">Phosphoprotein</keyword>
<keyword id="KW-1267">Proteomics identification</keyword>
<keyword id="KW-1185">Reference proteome</keyword>
<keyword id="KW-0677">Repeat</keyword>
<keyword id="KW-0804">Transcription</keyword>
<keyword id="KW-0805">Transcription regulation</keyword>
<keyword id="KW-0832">Ubl conjugation</keyword>
<keyword id="KW-0862">Zinc</keyword>
<keyword id="KW-0863">Zinc-finger</keyword>
<feature type="chain" id="PRO_0000047193" description="Zinc finger protein Gfi-1">
    <location>
        <begin position="1"/>
        <end position="422"/>
    </location>
</feature>
<feature type="zinc finger region" description="C2H2-type 1" evidence="4">
    <location>
        <begin position="255"/>
        <end position="278"/>
    </location>
</feature>
<feature type="zinc finger region" description="C2H2-type 2" evidence="4">
    <location>
        <begin position="284"/>
        <end position="306"/>
    </location>
</feature>
<feature type="zinc finger region" description="C2H2-type 3" evidence="4">
    <location>
        <begin position="312"/>
        <end position="334"/>
    </location>
</feature>
<feature type="zinc finger region" description="C2H2-type 4" evidence="4">
    <location>
        <begin position="340"/>
        <end position="362"/>
    </location>
</feature>
<feature type="zinc finger region" description="C2H2-type 5" evidence="4">
    <location>
        <begin position="368"/>
        <end position="390"/>
    </location>
</feature>
<feature type="zinc finger region" description="C2H2-type 6" evidence="4">
    <location>
        <begin position="396"/>
        <end position="419"/>
    </location>
</feature>
<feature type="region of interest" description="Disordered" evidence="5">
    <location>
        <begin position="1"/>
        <end position="109"/>
    </location>
</feature>
<feature type="region of interest" description="SNAG domain" evidence="1">
    <location>
        <begin position="1"/>
        <end position="20"/>
    </location>
</feature>
<feature type="region of interest" description="Required for interaction with RELA" evidence="16">
    <location>
        <begin position="140"/>
        <end position="257"/>
    </location>
</feature>
<feature type="modified residue" description="Phosphoserine" evidence="3">
    <location>
        <position position="20"/>
    </location>
</feature>
<feature type="modified residue" description="Phosphoserine" evidence="3">
    <location>
        <position position="56"/>
    </location>
</feature>
<feature type="sequence variant" id="VAR_052722" description="In dbSNP:rs34631763.">
    <original>S</original>
    <variation>N</variation>
    <location>
        <position position="36"/>
    </location>
</feature>
<feature type="sequence variant" id="VAR_016212" description="In SCN2; zero neutrophil count. marked monocytosis and reduced T- and B-lymphocyte number leading to recurrent infectious complications. Abolishes recognition of DNA binding site of zinc finger. Diminished repression activity and elevated ELA2 expression. No effect on repression of CDKN1A/p21 transcription; dbSNP:rs28936381." evidence="7 15">
    <original>N</original>
    <variation>S</variation>
    <location>
        <position position="382"/>
    </location>
</feature>
<feature type="sequence variant" id="VAR_016213" description="In NI-CINA; Neutropenic and elevated monocytosis but no history of infectious complications. No effect on DNA binding but diminished GFI1 repression activity; dbSNP:rs28936382." evidence="7">
    <original>K</original>
    <variation>R</variation>
    <location>
        <position position="403"/>
    </location>
</feature>
<feature type="mutagenesis site" description="Abrogates transcriptional repression." evidence="10">
    <original>P</original>
    <variation>A</variation>
    <location>
        <position position="2"/>
    </location>
</feature>
<feature type="sequence conflict" description="In Ref. 1; AAB37272." evidence="19" ref="1">
    <original>DSCEG</original>
    <variation>RQLRS</variation>
    <location>
        <begin position="73"/>
        <end position="77"/>
    </location>
</feature>
<feature type="sequence conflict" description="In Ref. 1; AAB37272." evidence="19" ref="1">
    <original>SCS</original>
    <variation>NCI</variation>
    <location>
        <begin position="184"/>
        <end position="186"/>
    </location>
</feature>
<feature type="sequence conflict" description="In Ref. 1; AAB37272." evidence="19" ref="1">
    <original>R</original>
    <variation>K</variation>
    <location>
        <position position="213"/>
    </location>
</feature>
<feature type="sequence conflict" description="In Ref. 1; AAB37272." evidence="19" ref="1">
    <original>G</original>
    <variation>R</variation>
    <location>
        <position position="228"/>
    </location>
</feature>
<feature type="sequence conflict" description="In Ref. 1; AAB37272." evidence="19" ref="1">
    <original>D</original>
    <variation>N</variation>
    <location>
        <position position="232"/>
    </location>
</feature>
<feature type="sequence conflict" description="In Ref. 1; AAB37272." evidence="19" ref="1">
    <original>P</original>
    <variation>L</variation>
    <location>
        <position position="367"/>
    </location>
</feature>
<name>GFI1_HUMAN</name>
<organism>
    <name type="scientific">Homo sapiens</name>
    <name type="common">Human</name>
    <dbReference type="NCBI Taxonomy" id="9606"/>
    <lineage>
        <taxon>Eukaryota</taxon>
        <taxon>Metazoa</taxon>
        <taxon>Chordata</taxon>
        <taxon>Craniata</taxon>
        <taxon>Vertebrata</taxon>
        <taxon>Euteleostomi</taxon>
        <taxon>Mammalia</taxon>
        <taxon>Eutheria</taxon>
        <taxon>Euarchontoglires</taxon>
        <taxon>Primates</taxon>
        <taxon>Haplorrhini</taxon>
        <taxon>Catarrhini</taxon>
        <taxon>Hominidae</taxon>
        <taxon>Homo</taxon>
    </lineage>
</organism>
<proteinExistence type="evidence at protein level"/>
<accession>Q99684</accession>
<accession>Q8N564</accession>
<evidence type="ECO:0000250" key="1"/>
<evidence type="ECO:0000250" key="2">
    <source>
        <dbReference type="UniProtKB" id="P70338"/>
    </source>
</evidence>
<evidence type="ECO:0000250" key="3">
    <source>
        <dbReference type="UniProtKB" id="Q07120"/>
    </source>
</evidence>
<evidence type="ECO:0000255" key="4">
    <source>
        <dbReference type="PROSITE-ProRule" id="PRU00042"/>
    </source>
</evidence>
<evidence type="ECO:0000256" key="5">
    <source>
        <dbReference type="SAM" id="MobiDB-lite"/>
    </source>
</evidence>
<evidence type="ECO:0000269" key="6">
    <source>
    </source>
</evidence>
<evidence type="ECO:0000269" key="7">
    <source>
    </source>
</evidence>
<evidence type="ECO:0000269" key="8">
    <source>
    </source>
</evidence>
<evidence type="ECO:0000269" key="9">
    <source>
    </source>
</evidence>
<evidence type="ECO:0000269" key="10">
    <source>
    </source>
</evidence>
<evidence type="ECO:0000269" key="11">
    <source>
    </source>
</evidence>
<evidence type="ECO:0000269" key="12">
    <source>
    </source>
</evidence>
<evidence type="ECO:0000269" key="13">
    <source>
    </source>
</evidence>
<evidence type="ECO:0000269" key="14">
    <source>
    </source>
</evidence>
<evidence type="ECO:0000269" key="15">
    <source>
    </source>
</evidence>
<evidence type="ECO:0000269" key="16">
    <source>
    </source>
</evidence>
<evidence type="ECO:0000269" key="17">
    <source>
    </source>
</evidence>
<evidence type="ECO:0000269" key="18">
    <source>
    </source>
</evidence>
<evidence type="ECO:0000305" key="19"/>
<reference key="1">
    <citation type="journal article" date="1997" name="Oncogene">
        <title>Cloning of the human Gfi-1 gene and its mapping to chromosome region 1p22.</title>
        <authorList>
            <person name="Roberts T."/>
            <person name="Cowell J.K."/>
        </authorList>
    </citation>
    <scope>NUCLEOTIDE SEQUENCE [MRNA]</scope>
    <source>
        <tissue>Bone marrow</tissue>
    </source>
</reference>
<reference key="2">
    <citation type="journal article" date="2004" name="Genome Res.">
        <title>The status, quality, and expansion of the NIH full-length cDNA project: the Mammalian Gene Collection (MGC).</title>
        <authorList>
            <consortium name="The MGC Project Team"/>
        </authorList>
    </citation>
    <scope>NUCLEOTIDE SEQUENCE [LARGE SCALE MRNA]</scope>
    <source>
        <tissue>Lung</tissue>
        <tissue>Testis</tissue>
    </source>
</reference>
<reference key="3">
    <citation type="journal article" date="1996" name="Mol. Cell. Biol.">
        <title>Gfi-1 encodes a nuclear zinc finger protein that binds DNA and functions as a transcriptional repressor.</title>
        <authorList>
            <person name="Zweidler-Mckay P.A."/>
            <person name="Grimes H.L."/>
            <person name="Flubacher M.M."/>
            <person name="Tsichlis P.N."/>
        </authorList>
    </citation>
    <scope>DNA-BINDING</scope>
    <scope>SUBCELLULAR LOCATION</scope>
    <scope>FUNCTION</scope>
</reference>
<reference key="4">
    <citation type="journal article" date="2000" name="EMBO J.">
        <title>The zinc finger protein Gfi-1 can enhance STAT3 signaling by interacting with the STAT3 inhibitor PIAS3.</title>
        <authorList>
            <person name="Roedel B."/>
            <person name="Tavassoli K."/>
            <person name="Karsunky H."/>
            <person name="Schmidt T."/>
            <person name="Bachmann M."/>
            <person name="Schaper F."/>
            <person name="Heinrich P."/>
            <person name="Shuai K."/>
            <person name="Elsaesser H.-P."/>
            <person name="Moeroey T."/>
        </authorList>
    </citation>
    <scope>INTERACTION WITH PIAS3</scope>
    <scope>SUBCELLULAR LOCATION</scope>
    <scope>FUNCTION</scope>
</reference>
<reference key="5">
    <citation type="journal article" date="2003" name="J. Cell. Biochem.">
        <title>Gfi-1 attaches to the nuclear matrix, associates with ETO (MTG8) and histone deacetylase proteins, and represses transcription using a TSA-sensitive mechanism.</title>
        <authorList>
            <person name="McGhee L."/>
            <person name="Bryan J."/>
            <person name="Elliott L."/>
            <person name="Grimes H.L."/>
            <person name="Kazanjian A."/>
            <person name="Davis J.N."/>
            <person name="Meyers S."/>
        </authorList>
    </citation>
    <scope>IDENTIFICATION IN A COMPLEX WITH RUNX1T1; HDAC1; HDAC2 AND HDAC3</scope>
    <scope>INTERACTION WITH RUNX1T1</scope>
    <scope>SUBCELLULAR LOCATION</scope>
</reference>
<reference key="6">
    <citation type="journal article" date="2005" name="Mol. Cell. Biol.">
        <title>Gfi1 coordinates epigenetic repression of p21Cip/WAF1 by recruitment of histone lysine methyltransferase G9a and histone deacetylase 1.</title>
        <authorList>
            <person name="Duan Z."/>
            <person name="Zarebski A."/>
            <person name="Montoya-Durango D."/>
            <person name="Grimes H.L."/>
            <person name="Horwitz M."/>
        </authorList>
    </citation>
    <scope>IDENTIFICATION IN A COMPLEX WITH EHMT2 AND HDAC1</scope>
    <scope>INTERACTION WITH EHMT2 AND HDAC1</scope>
    <scope>FUNCTION</scope>
</reference>
<reference key="7">
    <citation type="journal article" date="2007" name="Blood">
        <title>Gfi1 ubiquitination and proteasomal degradation is inhibited by the ubiquitin ligase Triad1.</title>
        <authorList>
            <person name="Marteijn J.A."/>
            <person name="van der Meer L.T."/>
            <person name="van Emst L."/>
            <person name="van Reijmersdal S."/>
            <person name="Wissink W."/>
            <person name="de Witte T."/>
            <person name="Jansen J.H."/>
            <person name="Van der Reijden B.A."/>
        </authorList>
    </citation>
    <scope>FUNCTION</scope>
    <scope>INTERACTION WITH ARIH2</scope>
    <scope>UBIQUITINATION</scope>
</reference>
<reference key="8">
    <citation type="journal article" date="2007" name="J. Biol. Chem.">
        <title>The transcriptional repressor GFI-1 antagonizes PU.1 activity through protein-protein interaction.</title>
        <authorList>
            <person name="Dahl R."/>
            <person name="Iyer S.R."/>
            <person name="Owens K.S."/>
            <person name="Cuylear D.D."/>
            <person name="Simon M.C."/>
        </authorList>
    </citation>
    <scope>INTERACTION WITH SPI1</scope>
    <scope>DOMAIN ZINC-FINGER</scope>
    <scope>FUNCTION</scope>
    <scope>MUTAGENESIS OF PRO-2</scope>
</reference>
<reference key="9">
    <citation type="journal article" date="2008" name="J. Biol. Chem.">
        <title>Ajuba functions as a histone deacetylase-dependent co-repressor for autoregulation of the growth factor-independent-1 transcription factor.</title>
        <authorList>
            <person name="Montoya-Durango D.E."/>
            <person name="Velu C.S."/>
            <person name="Kazanjian A."/>
            <person name="Rojas M.E."/>
            <person name="Jay C.M."/>
            <person name="Longmore G.D."/>
            <person name="Grimes H.L."/>
        </authorList>
    </citation>
    <scope>INTERACTION WITH AJUBA IN THE GFI1-AJUBA-HDAC COMPLEX</scope>
    <scope>SUBCELLULAR LOCATION</scope>
    <scope>FUNCTION</scope>
</reference>
<reference key="10">
    <citation type="journal article" date="2009" name="J. Neurosci. Methods">
        <title>Loss of function genetic screens reveal MTGR1 as an intracellular repressor of beta1 integrin-dependent neurite outgrowth.</title>
        <authorList>
            <person name="Ossovskaya V.S."/>
            <person name="Dolganov G."/>
            <person name="Basbaum A.I."/>
        </authorList>
    </citation>
    <scope>FUNCTION</scope>
</reference>
<reference key="11">
    <citation type="journal article" date="2009" name="Proc. Natl. Acad. Sci. U.S.A.">
        <title>Gfi-1 represses CDKN2B encoding p15INK4B through interaction with Miz-1.</title>
        <authorList>
            <person name="Basu S."/>
            <person name="Liu Q."/>
            <person name="Qiu Y."/>
            <person name="Dong F."/>
        </authorList>
    </citation>
    <scope>FUNCTION</scope>
    <scope>INTERACTION WITH ZBTB17</scope>
</reference>
<reference key="12">
    <citation type="journal article" date="2010" name="Mol. Cell. Biol.">
        <title>Zinc finger protein Gfi1 controls the endotoxin-mediated Toll-like receptor inflammatory response by antagonizing NF-kappaB p65.</title>
        <authorList>
            <person name="Sharif-Askari E."/>
            <person name="Vassen L."/>
            <person name="Kosan C."/>
            <person name="Khandanpour C."/>
            <person name="Gaudreau M.C."/>
            <person name="Heyd F."/>
            <person name="Okayama T."/>
            <person name="Jin J."/>
            <person name="Rojas M.E."/>
            <person name="Grimes H.L."/>
            <person name="Zeng H."/>
            <person name="Moroy T."/>
        </authorList>
    </citation>
    <scope>INTERACTION WITH RELA</scope>
    <scope>SUBCELLULAR LOCATION</scope>
    <scope>INDUCTION</scope>
    <scope>FUNCTION</scope>
</reference>
<reference key="13">
    <citation type="journal article" date="2010" name="Oncogene">
        <title>A role of Miz-1 in Gfi-1-mediated transcriptional repression of CDKN1A.</title>
        <authorList>
            <person name="Liu Q."/>
            <person name="Basu S."/>
            <person name="Qiu Y."/>
            <person name="Tang F."/>
            <person name="Dong F."/>
        </authorList>
    </citation>
    <scope>INTERACTION WITH ZBTB17</scope>
    <scope>FUNCTION</scope>
    <scope>INDUCTION</scope>
    <scope>CHARACTERIZATION OF VARIANT SER-382</scope>
</reference>
<reference key="14">
    <citation type="journal article" date="2018" name="Nat. Commun.">
        <title>GFI1 facilitates efficient DNA repair by regulating PRMT1 dependent methylation of MRE11 and 53BP1.</title>
        <authorList>
            <person name="Vadnais C."/>
            <person name="Chen R."/>
            <person name="Fraszczak J."/>
            <person name="Yu Z."/>
            <person name="Boulais J."/>
            <person name="Pinder J."/>
            <person name="Frank D."/>
            <person name="Khandanpour C."/>
            <person name="Hebert J."/>
            <person name="Dellaire G."/>
            <person name="Cote J.F."/>
            <person name="Richard S."/>
            <person name="Orthwein A."/>
            <person name="Drobetsky E."/>
            <person name="Moeroey T."/>
        </authorList>
    </citation>
    <scope>FUNCTION</scope>
</reference>
<reference key="15">
    <citation type="journal article" date="2003" name="Nat. Genet.">
        <title>Mutations in proto-oncogene GFI1 cause human neutropenia and target ELA2.</title>
        <authorList>
            <person name="Person R.E."/>
            <person name="Li F.-Q."/>
            <person name="Duan Z."/>
            <person name="Benson K.F."/>
            <person name="Wechsler J."/>
            <person name="Papadaki H.A."/>
            <person name="Eliopoulos G."/>
            <person name="Kaufman C."/>
            <person name="Bertolone S.J."/>
            <person name="Nakamoto B."/>
            <person name="Papayannopoulou T."/>
            <person name="Grimes H.L."/>
            <person name="Horwitz M."/>
        </authorList>
    </citation>
    <scope>VARIANT NI-CINA ARG-403</scope>
    <scope>VARIANT SCN2 SER-382</scope>
    <scope>CHARACTERIZATION OF VARIANTS NI-CINA ARG-403 AND SCN2 SER-382</scope>
    <scope>FUNCTION</scope>
</reference>
<gene>
    <name type="primary">GFI1</name>
    <name type="synonym">ZNF163</name>
</gene>
<dbReference type="EMBL" id="U67369">
    <property type="protein sequence ID" value="AAB37272.1"/>
    <property type="molecule type" value="mRNA"/>
</dbReference>
<dbReference type="EMBL" id="BC032751">
    <property type="protein sequence ID" value="AAH32751.1"/>
    <property type="molecule type" value="mRNA"/>
</dbReference>
<dbReference type="EMBL" id="BC074866">
    <property type="protein sequence ID" value="AAH74866.1"/>
    <property type="molecule type" value="mRNA"/>
</dbReference>
<dbReference type="EMBL" id="BC074867">
    <property type="protein sequence ID" value="AAH74867.1"/>
    <property type="molecule type" value="mRNA"/>
</dbReference>
<dbReference type="CCDS" id="CCDS30773.1"/>
<dbReference type="RefSeq" id="NP_001120687.1">
    <property type="nucleotide sequence ID" value="NM_001127215.3"/>
</dbReference>
<dbReference type="RefSeq" id="NP_001120688.1">
    <property type="nucleotide sequence ID" value="NM_001127216.3"/>
</dbReference>
<dbReference type="RefSeq" id="NP_005254.2">
    <property type="nucleotide sequence ID" value="NM_005263.5"/>
</dbReference>
<dbReference type="RefSeq" id="XP_005270806.1">
    <property type="nucleotide sequence ID" value="XM_005270749.4"/>
</dbReference>
<dbReference type="RefSeq" id="XP_011539547.1">
    <property type="nucleotide sequence ID" value="XM_011541245.3"/>
</dbReference>
<dbReference type="RefSeq" id="XP_011539548.1">
    <property type="nucleotide sequence ID" value="XM_011541246.3"/>
</dbReference>
<dbReference type="RefSeq" id="XP_054191952.1">
    <property type="nucleotide sequence ID" value="XM_054335977.1"/>
</dbReference>
<dbReference type="RefSeq" id="XP_054191953.1">
    <property type="nucleotide sequence ID" value="XM_054335978.1"/>
</dbReference>
<dbReference type="RefSeq" id="XP_054191954.1">
    <property type="nucleotide sequence ID" value="XM_054335979.1"/>
</dbReference>
<dbReference type="RefSeq" id="XP_054191955.1">
    <property type="nucleotide sequence ID" value="XM_054335980.1"/>
</dbReference>
<dbReference type="SMR" id="Q99684"/>
<dbReference type="BioGRID" id="108940">
    <property type="interactions" value="23"/>
</dbReference>
<dbReference type="CORUM" id="Q99684"/>
<dbReference type="DIP" id="DIP-38452N"/>
<dbReference type="FunCoup" id="Q99684">
    <property type="interactions" value="506"/>
</dbReference>
<dbReference type="IntAct" id="Q99684">
    <property type="interactions" value="18"/>
</dbReference>
<dbReference type="STRING" id="9606.ENSP00000294702"/>
<dbReference type="iPTMnet" id="Q99684"/>
<dbReference type="PhosphoSitePlus" id="Q99684"/>
<dbReference type="BioMuta" id="GFI1"/>
<dbReference type="DMDM" id="33860154"/>
<dbReference type="jPOST" id="Q99684"/>
<dbReference type="MassIVE" id="Q99684"/>
<dbReference type="PaxDb" id="9606-ENSP00000359357"/>
<dbReference type="PeptideAtlas" id="Q99684"/>
<dbReference type="ProteomicsDB" id="78396"/>
<dbReference type="Antibodypedia" id="4402">
    <property type="antibodies" value="300 antibodies from 32 providers"/>
</dbReference>
<dbReference type="DNASU" id="2672"/>
<dbReference type="Ensembl" id="ENST00000294702.6">
    <property type="protein sequence ID" value="ENSP00000294702.5"/>
    <property type="gene ID" value="ENSG00000162676.13"/>
</dbReference>
<dbReference type="Ensembl" id="ENST00000370332.5">
    <property type="protein sequence ID" value="ENSP00000359357.1"/>
    <property type="gene ID" value="ENSG00000162676.13"/>
</dbReference>
<dbReference type="Ensembl" id="ENST00000427103.6">
    <property type="protein sequence ID" value="ENSP00000399719.1"/>
    <property type="gene ID" value="ENSG00000162676.13"/>
</dbReference>
<dbReference type="GeneID" id="2672"/>
<dbReference type="KEGG" id="hsa:2672"/>
<dbReference type="MANE-Select" id="ENST00000294702.6">
    <property type="protein sequence ID" value="ENSP00000294702.5"/>
    <property type="RefSeq nucleotide sequence ID" value="NM_005263.5"/>
    <property type="RefSeq protein sequence ID" value="NP_005254.2"/>
</dbReference>
<dbReference type="UCSC" id="uc001dou.5">
    <property type="organism name" value="human"/>
</dbReference>
<dbReference type="AGR" id="HGNC:4237"/>
<dbReference type="CTD" id="2672"/>
<dbReference type="DisGeNET" id="2672"/>
<dbReference type="GeneCards" id="GFI1"/>
<dbReference type="HGNC" id="HGNC:4237">
    <property type="gene designation" value="GFI1"/>
</dbReference>
<dbReference type="HPA" id="ENSG00000162676">
    <property type="expression patterns" value="Group enriched (bone marrow, lymphoid tissue)"/>
</dbReference>
<dbReference type="MalaCards" id="GFI1"/>
<dbReference type="MIM" id="600871">
    <property type="type" value="gene"/>
</dbReference>
<dbReference type="MIM" id="607847">
    <property type="type" value="phenotype"/>
</dbReference>
<dbReference type="MIM" id="613107">
    <property type="type" value="phenotype"/>
</dbReference>
<dbReference type="neXtProt" id="NX_Q99684"/>
<dbReference type="OpenTargets" id="ENSG00000162676"/>
<dbReference type="Orphanet" id="486">
    <property type="disease" value="Autosomal dominant severe congenital neutropenia"/>
</dbReference>
<dbReference type="PharmGKB" id="PA24344"/>
<dbReference type="VEuPathDB" id="HostDB:ENSG00000162676"/>
<dbReference type="eggNOG" id="KOG1721">
    <property type="taxonomic scope" value="Eukaryota"/>
</dbReference>
<dbReference type="GeneTree" id="ENSGT00940000156166"/>
<dbReference type="HOGENOM" id="CLU_002678_94_9_1"/>
<dbReference type="InParanoid" id="Q99684"/>
<dbReference type="OMA" id="CDRVSEF"/>
<dbReference type="OrthoDB" id="6155966at2759"/>
<dbReference type="PAN-GO" id="Q99684">
    <property type="GO annotations" value="3 GO annotations based on evolutionary models"/>
</dbReference>
<dbReference type="PhylomeDB" id="Q99684"/>
<dbReference type="TreeFam" id="TF350784"/>
<dbReference type="PathwayCommons" id="Q99684"/>
<dbReference type="Reactome" id="R-HSA-9616222">
    <property type="pathway name" value="Transcriptional regulation of granulopoiesis"/>
</dbReference>
<dbReference type="SignaLink" id="Q99684"/>
<dbReference type="SIGNOR" id="Q99684"/>
<dbReference type="BioGRID-ORCS" id="2672">
    <property type="hits" value="43 hits in 1176 CRISPR screens"/>
</dbReference>
<dbReference type="GeneWiki" id="GFI1"/>
<dbReference type="GenomeRNAi" id="2672"/>
<dbReference type="Pharos" id="Q99684">
    <property type="development level" value="Tbio"/>
</dbReference>
<dbReference type="PRO" id="PR:Q99684"/>
<dbReference type="Proteomes" id="UP000005640">
    <property type="component" value="Chromosome 1"/>
</dbReference>
<dbReference type="RNAct" id="Q99684">
    <property type="molecule type" value="protein"/>
</dbReference>
<dbReference type="Bgee" id="ENSG00000162676">
    <property type="expression patterns" value="Expressed in granulocyte and 109 other cell types or tissues"/>
</dbReference>
<dbReference type="GO" id="GO:0016604">
    <property type="term" value="C:nuclear body"/>
    <property type="evidence" value="ECO:0000314"/>
    <property type="project" value="UniProtKB"/>
</dbReference>
<dbReference type="GO" id="GO:0016363">
    <property type="term" value="C:nuclear matrix"/>
    <property type="evidence" value="ECO:0000314"/>
    <property type="project" value="UniProtKB"/>
</dbReference>
<dbReference type="GO" id="GO:0005634">
    <property type="term" value="C:nucleus"/>
    <property type="evidence" value="ECO:0000314"/>
    <property type="project" value="UniProtKB"/>
</dbReference>
<dbReference type="GO" id="GO:0017053">
    <property type="term" value="C:transcription repressor complex"/>
    <property type="evidence" value="ECO:0000314"/>
    <property type="project" value="UniProtKB"/>
</dbReference>
<dbReference type="GO" id="GO:0003700">
    <property type="term" value="F:DNA-binding transcription factor activity"/>
    <property type="evidence" value="ECO:0000318"/>
    <property type="project" value="GO_Central"/>
</dbReference>
<dbReference type="GO" id="GO:0001227">
    <property type="term" value="F:DNA-binding transcription repressor activity, RNA polymerase II-specific"/>
    <property type="evidence" value="ECO:0000314"/>
    <property type="project" value="UniProtKB"/>
</dbReference>
<dbReference type="GO" id="GO:0140767">
    <property type="term" value="F:enzyme-substrate adaptor activity"/>
    <property type="evidence" value="ECO:0000314"/>
    <property type="project" value="UniProtKB"/>
</dbReference>
<dbReference type="GO" id="GO:0000978">
    <property type="term" value="F:RNA polymerase II cis-regulatory region sequence-specific DNA binding"/>
    <property type="evidence" value="ECO:0000318"/>
    <property type="project" value="GO_Central"/>
</dbReference>
<dbReference type="GO" id="GO:1990837">
    <property type="term" value="F:sequence-specific double-stranded DNA binding"/>
    <property type="evidence" value="ECO:0000314"/>
    <property type="project" value="ARUK-UCL"/>
</dbReference>
<dbReference type="GO" id="GO:0000976">
    <property type="term" value="F:transcription cis-regulatory region binding"/>
    <property type="evidence" value="ECO:0000314"/>
    <property type="project" value="BHF-UCL"/>
</dbReference>
<dbReference type="GO" id="GO:0008270">
    <property type="term" value="F:zinc ion binding"/>
    <property type="evidence" value="ECO:0007669"/>
    <property type="project" value="UniProtKB-KW"/>
</dbReference>
<dbReference type="GO" id="GO:0071222">
    <property type="term" value="P:cellular response to lipopolysaccharide"/>
    <property type="evidence" value="ECO:0000270"/>
    <property type="project" value="UniProtKB"/>
</dbReference>
<dbReference type="GO" id="GO:0006974">
    <property type="term" value="P:DNA damage response"/>
    <property type="evidence" value="ECO:0000314"/>
    <property type="project" value="UniProtKB"/>
</dbReference>
<dbReference type="GO" id="GO:0045892">
    <property type="term" value="P:negative regulation of DNA-templated transcription"/>
    <property type="evidence" value="ECO:0000314"/>
    <property type="project" value="UniProtKB"/>
</dbReference>
<dbReference type="GO" id="GO:0010977">
    <property type="term" value="P:negative regulation of neuron projection development"/>
    <property type="evidence" value="ECO:0000314"/>
    <property type="project" value="UniProtKB"/>
</dbReference>
<dbReference type="GO" id="GO:0032088">
    <property type="term" value="P:negative regulation of NF-kappaB transcription factor activity"/>
    <property type="evidence" value="ECO:0000250"/>
    <property type="project" value="UniProtKB"/>
</dbReference>
<dbReference type="GO" id="GO:0000122">
    <property type="term" value="P:negative regulation of transcription by RNA polymerase II"/>
    <property type="evidence" value="ECO:0000314"/>
    <property type="project" value="UniProtKB"/>
</dbReference>
<dbReference type="GO" id="GO:0010957">
    <property type="term" value="P:negative regulation of vitamin D biosynthetic process"/>
    <property type="evidence" value="ECO:0000314"/>
    <property type="project" value="BHF-UCL"/>
</dbReference>
<dbReference type="GO" id="GO:0070105">
    <property type="term" value="P:positive regulation of interleukin-6-mediated signaling pathway"/>
    <property type="evidence" value="ECO:0000314"/>
    <property type="project" value="UniProtKB"/>
</dbReference>
<dbReference type="GO" id="GO:0034121">
    <property type="term" value="P:regulation of toll-like receptor signaling pathway"/>
    <property type="evidence" value="ECO:0000314"/>
    <property type="project" value="UniProtKB"/>
</dbReference>
<dbReference type="GO" id="GO:0006357">
    <property type="term" value="P:regulation of transcription by RNA polymerase II"/>
    <property type="evidence" value="ECO:0000318"/>
    <property type="project" value="GO_Central"/>
</dbReference>
<dbReference type="FunFam" id="3.30.160.60:FF:000489">
    <property type="entry name" value="Zinc finger protein Gfi-1"/>
    <property type="match status" value="1"/>
</dbReference>
<dbReference type="FunFam" id="3.30.160.60:FF:000827">
    <property type="entry name" value="Zinc finger protein Gfi-1"/>
    <property type="match status" value="1"/>
</dbReference>
<dbReference type="FunFam" id="3.30.160.60:FF:000148">
    <property type="entry name" value="zinc finger protein Gfi-1"/>
    <property type="match status" value="1"/>
</dbReference>
<dbReference type="FunFam" id="3.30.160.60:FF:000245">
    <property type="entry name" value="zinc finger protein Gfi-1"/>
    <property type="match status" value="1"/>
</dbReference>
<dbReference type="FunFam" id="3.30.160.60:FF:000208">
    <property type="entry name" value="zinc finger protein Gfi-1b"/>
    <property type="match status" value="1"/>
</dbReference>
<dbReference type="FunFam" id="3.30.160.60:FF:000432">
    <property type="entry name" value="zinc finger protein Gfi-1b isoform X1"/>
    <property type="match status" value="1"/>
</dbReference>
<dbReference type="Gene3D" id="3.30.160.60">
    <property type="entry name" value="Classic Zinc Finger"/>
    <property type="match status" value="6"/>
</dbReference>
<dbReference type="InterPro" id="IPR036236">
    <property type="entry name" value="Znf_C2H2_sf"/>
</dbReference>
<dbReference type="InterPro" id="IPR013087">
    <property type="entry name" value="Znf_C2H2_type"/>
</dbReference>
<dbReference type="PANTHER" id="PTHR23226:SF419">
    <property type="entry name" value="FI21258P1-RELATED"/>
    <property type="match status" value="1"/>
</dbReference>
<dbReference type="PANTHER" id="PTHR23226">
    <property type="entry name" value="ZINC FINGER AND SCAN DOMAIN-CONTAINING"/>
    <property type="match status" value="1"/>
</dbReference>
<dbReference type="Pfam" id="PF00096">
    <property type="entry name" value="zf-C2H2"/>
    <property type="match status" value="6"/>
</dbReference>
<dbReference type="SMART" id="SM00355">
    <property type="entry name" value="ZnF_C2H2"/>
    <property type="match status" value="6"/>
</dbReference>
<dbReference type="SUPFAM" id="SSF57667">
    <property type="entry name" value="beta-beta-alpha zinc fingers"/>
    <property type="match status" value="3"/>
</dbReference>
<dbReference type="PROSITE" id="PS00028">
    <property type="entry name" value="ZINC_FINGER_C2H2_1"/>
    <property type="match status" value="6"/>
</dbReference>
<dbReference type="PROSITE" id="PS50157">
    <property type="entry name" value="ZINC_FINGER_C2H2_2"/>
    <property type="match status" value="6"/>
</dbReference>
<comment type="function">
    <text evidence="2 6 7 9 10 11 12 13 14 15 16 17 18">Transcription repressor essential for hematopoiesis (PubMed:11060035, PubMed:17197705, PubMed:17646546, PubMed:18805794, PubMed:19164764, PubMed:20190815, PubMed:8754800). Functions in a cell-context and development-specific manner (PubMed:11060035, PubMed:17197705, PubMed:17646546, PubMed:18805794, PubMed:19164764, PubMed:20190815, PubMed:8754800). Binds to 5'-TAAATCAC[AT]GCA-3' in the promoter region of a large number of genes (PubMed:11060035, PubMed:17197705, PubMed:17646546, PubMed:18805794, PubMed:19164764, PubMed:20190815, PubMed:8754800). Component of several complexes, including the EHMT2-GFI1-HDAC1, AJUBA-GFI1-HDAC1 and RCOR-GFI-KDM1A-HDAC complexes, that suppress, via histone deacetylase (HDAC) recruitment, a number of genes implicated in multilineage blood cell development (PubMed:16287849). Regulates neutrophil differentiation, promotes proliferation of lymphoid cells, and is required for granulocyte development (PubMed:12778173). Inhibits SPI1 transcriptional activity at macrophage-specific genes, repressing macrophage differentiation of myeloid progenitor cells and promoting granulocyte commitment (By similarity). Mediates, together with U2AF1L4, the alternative splicing of CD45 and controls T-cell receptor signaling (By similarity). Regulates the endotoxin-mediated Toll-like receptor (TLR) inflammatory response by antagonizing RELA (PubMed:20547752). Cooperates with CBFA2T2 to regulate ITGB1-dependent neurite growth (PubMed:19026687). Controls cell-cycle progression by repressing CDKNIA/p21 transcription in response to TGFB1 via recruitment of GFI1 by ZBTB17 to the CDKNIA/p21 and CDKNIB promoters (PubMed:16287849). Required for the maintenance of inner ear hair cells (By similarity). In addition to its role in transcription, acts as a substrate adapter for PRMT1 in the DNA damage response: facilitates the recognition of TP53BP1 and MRE11 substrates by PRMT1, promoting their methylation and the DNA damage response (PubMed:29651020).</text>
</comment>
<comment type="subunit">
    <text evidence="1 2 6 8 9 10 11 12 14 15 16">Interacts with U2AF1L4. Component of RCOR-GFI-KDM1A-HDAC complexes. Interacts directly with RCOR1, KDM1A and HDAC2 (By similarity). Also interacts with HDAC1. Interacts (via the zinc-finger domain) with ARIH2; the interaction prevents GFI1 ubiquitination and proteasomal degradation. Interacts with PIAS3; the interaction relieves the inhibitory effect of PIAS3 on STAT3-mediated transcriptional activity. Forms a complex with EHMT2 and HDAC1 to promote 'Lys-9' dimethylation of H3 (H3K9Me2) and repress expression of target genes. Interacts directly with EHMT2. Component of the GFI1-AJUBA-HDAC1 repressor complex. Interacts directly with AJUBA (via ITS LIM domains); the interaction results in the HDAC-dependent corepression of a subset of GFI1 target genes and, occurs independently of the SNAG domain. Interacts with SPI1; the interaction inhibits SPI1 transcriptional activity targeted at macrophage-specific genes, repressing macrophage differentiation of myeloid progenitor cells and promoting granulocyte commitment (By similarity). Interacts with RUNX1T1; the interaction represses HDAC-mediated transcriptional activity. Interacts with RELA; the interaction occurs on liposaccharide (LPS) stimulation and controls RELA DNA binding activity and regulates endotoxin-mediated TOLL-like receptor inflammatory response. Interacts (via the C-terminal zinc fingers) with ZBTB17; the interaction results in the recruitment of GFI1 to the CDKN1A/p21 and CDKN1B promoters and repression of transcription.</text>
</comment>
<comment type="interaction">
    <interactant intactId="EBI-949368">
        <id>Q99684</id>
    </interactant>
    <interactant intactId="EBI-1020839">
        <id>Q13111</id>
        <label>CHAF1A</label>
    </interactant>
    <organismsDiffer>false</organismsDiffer>
    <experiments>4</experiments>
</comment>
<comment type="interaction">
    <interactant intactId="EBI-949368">
        <id>Q99684</id>
    </interactant>
    <interactant intactId="EBI-744366">
        <id>Q96KQ7</id>
        <label>EHMT2</label>
    </interactant>
    <organismsDiffer>false</organismsDiffer>
    <experiments>2</experiments>
</comment>
<comment type="interaction">
    <interactant intactId="EBI-949368">
        <id>Q99684</id>
    </interactant>
    <interactant intactId="EBI-301834">
        <id>Q13547</id>
        <label>HDAC1</label>
    </interactant>
    <organismsDiffer>false</organismsDiffer>
    <experiments>4</experiments>
</comment>
<comment type="interaction">
    <interactant intactId="EBI-949368">
        <id>Q99684</id>
    </interactant>
    <interactant intactId="EBI-4292031">
        <id>Q9NQX1</id>
        <label>PRDM5</label>
    </interactant>
    <organismsDiffer>false</organismsDiffer>
    <experiments>2</experiments>
</comment>
<comment type="interaction">
    <interactant intactId="EBI-949368">
        <id>Q99684</id>
    </interactant>
    <interactant intactId="EBI-73886">
        <id>Q04206</id>
        <label>RELA</label>
    </interactant>
    <organismsDiffer>false</organismsDiffer>
    <experiments>2</experiments>
</comment>
<comment type="interaction">
    <interactant intactId="EBI-949368">
        <id>Q99684</id>
    </interactant>
    <interactant intactId="EBI-1565930">
        <id>Q91XC0</id>
        <label>Ajuba</label>
    </interactant>
    <organismsDiffer>true</organismsDiffer>
    <experiments>4</experiments>
</comment>
<comment type="interaction">
    <interactant intactId="EBI-949368">
        <id>Q99684</id>
    </interactant>
    <interactant intactId="EBI-607588">
        <id>P17433</id>
        <label>Spi1</label>
    </interactant>
    <organismsDiffer>true</organismsDiffer>
    <experiments>2</experiments>
</comment>
<comment type="subcellular location">
    <subcellularLocation>
        <location evidence="6 8 12 16 18">Nucleus</location>
    </subcellularLocation>
    <text>Colocalizes with PIAS3 and RUNX1T1 in nuclear dots.</text>
</comment>
<comment type="induction">
    <text evidence="15 16">Down-regulated by TGFB1.</text>
</comment>
<comment type="domain">
    <text evidence="10">Zinc fingers 3, 4 and 5 are required for DNA-binding and for interaction with SPI1.</text>
</comment>
<comment type="domain">
    <text evidence="1">The SNAG domain of GFIs is required for nuclear location and for interaction with some corepressors.</text>
</comment>
<comment type="PTM">
    <text evidence="11">Ubiquitinated. Ubiquitination and degradation by the proteasome is inhibited by the ubiquitin ligase, ARIH2.</text>
</comment>
<comment type="disease" evidence="7">
    <disease id="DI-01226">
        <name>Neutropenia, severe congenital 2, autosomal dominant</name>
        <acronym>SCN2</acronym>
        <description>A disorder of hematopoiesis characterized by maturation arrest of granulopoiesis at the level of promyelocytes with peripheral blood absolute neutrophil counts below 0.5 x 10(9)/l and early onset of severe bacterial infections.</description>
        <dbReference type="MIM" id="613107"/>
    </disease>
    <text>The disease is caused by variants affecting the gene represented in this entry.</text>
</comment>
<comment type="disease" evidence="7">
    <disease id="DI-01499">
        <name>Dominant nonimmune chronic idiopathic neutropenia of adults</name>
        <acronym>NI-CINA</acronym>
        <description>Relatively mild form of neutropenia diagnosed in adults, but predisposing to leukemia in a subset of patients.</description>
        <dbReference type="MIM" id="607847"/>
    </disease>
    <text>The disease is caused by variants affecting the gene represented in this entry.</text>
</comment>
<comment type="online information" name="GFI1base">
    <link uri="https://databases.lovd.nl/shared/genes/GFI1"/>
    <text>GFI1 mutation db</text>
</comment>
<comment type="online information" name="Atlas of Genetics and Cytogenetics in Oncology and Haematology">
    <link uri="https://atlasgeneticsoncology.org/gene/40706/GFI1"/>
</comment>
<protein>
    <recommendedName>
        <fullName>Zinc finger protein Gfi-1</fullName>
    </recommendedName>
    <alternativeName>
        <fullName>Growth factor independent protein 1</fullName>
    </alternativeName>
    <alternativeName>
        <fullName>Zinc finger protein 163</fullName>
    </alternativeName>
</protein>
<sequence length="422" mass="45297">MPRSFLVKSKKAHSYHQPRSPGPDYSLRLENVPAPSRADSTSNAGGAKAEPRDRLSPESQLTEAPDRASASPDSCEGSVCERSSEFEDFWRPPSPSASPASEKSMCPSLDEAQPFPLPFKPYSWSGLAGSDLRHLVQSYRPCGALERGAGLGLFCEPAPEPGHPAALYGPKRAAGGAGAGAPGSCSAGAGATAGPGLGLYGDFGSAAAGLYERPTAAAGLLYPERGHGLHADKGAGVKVESELLCTRLLLGGGSYKCIKCSKVFSTPHGLEVHVRRSHSGTRPFACEMCGKTFGHAVSLEQHKAVHSQERSFDCKICGKSFKRSSTLSTHLLIHSDTRPYPCQYCGKRFHQKSDMKKHTFIHTGEKPHKCQVCGKAFSQSSNLITHSRKHTGFKPFGCDLCGKGFQRKVDLRRHRETQHGLK</sequence>